<accession>Q669N6</accession>
<dbReference type="EMBL" id="BX936398">
    <property type="protein sequence ID" value="CAH21686.1"/>
    <property type="molecule type" value="Genomic_DNA"/>
</dbReference>
<dbReference type="SMR" id="Q669N6"/>
<dbReference type="ESTHER" id="yerpe-y1616">
    <property type="family name" value="abh_upf00227"/>
</dbReference>
<dbReference type="KEGG" id="ypo:BZ17_2"/>
<dbReference type="KEGG" id="yps:YPTB2448"/>
<dbReference type="PATRIC" id="fig|273123.14.peg.2"/>
<dbReference type="Proteomes" id="UP000001011">
    <property type="component" value="Chromosome"/>
</dbReference>
<dbReference type="Gene3D" id="3.40.50.1820">
    <property type="entry name" value="alpha/beta hydrolase"/>
    <property type="match status" value="1"/>
</dbReference>
<dbReference type="HAMAP" id="MF_01047">
    <property type="entry name" value="UPF0227"/>
    <property type="match status" value="1"/>
</dbReference>
<dbReference type="InterPro" id="IPR029058">
    <property type="entry name" value="AB_hydrolase_fold"/>
</dbReference>
<dbReference type="InterPro" id="IPR022987">
    <property type="entry name" value="UPF0227"/>
</dbReference>
<dbReference type="InterPro" id="IPR008886">
    <property type="entry name" value="UPF0227/Esterase_YqiA"/>
</dbReference>
<dbReference type="NCBIfam" id="NF003431">
    <property type="entry name" value="PRK04940.1"/>
    <property type="match status" value="1"/>
</dbReference>
<dbReference type="PANTHER" id="PTHR35602">
    <property type="entry name" value="ESTERASE YQIA-RELATED"/>
    <property type="match status" value="1"/>
</dbReference>
<dbReference type="PANTHER" id="PTHR35602:SF2">
    <property type="entry name" value="UPF0227 PROTEIN YCFP"/>
    <property type="match status" value="1"/>
</dbReference>
<dbReference type="Pfam" id="PF05728">
    <property type="entry name" value="UPF0227"/>
    <property type="match status" value="1"/>
</dbReference>
<dbReference type="SUPFAM" id="SSF53474">
    <property type="entry name" value="alpha/beta-Hydrolases"/>
    <property type="match status" value="1"/>
</dbReference>
<reference key="1">
    <citation type="journal article" date="2004" name="Proc. Natl. Acad. Sci. U.S.A.">
        <title>Insights into the evolution of Yersinia pestis through whole-genome comparison with Yersinia pseudotuberculosis.</title>
        <authorList>
            <person name="Chain P.S.G."/>
            <person name="Carniel E."/>
            <person name="Larimer F.W."/>
            <person name="Lamerdin J."/>
            <person name="Stoutland P.O."/>
            <person name="Regala W.M."/>
            <person name="Georgescu A.M."/>
            <person name="Vergez L.M."/>
            <person name="Land M.L."/>
            <person name="Motin V.L."/>
            <person name="Brubaker R.R."/>
            <person name="Fowler J."/>
            <person name="Hinnebusch J."/>
            <person name="Marceau M."/>
            <person name="Medigue C."/>
            <person name="Simonet M."/>
            <person name="Chenal-Francisque V."/>
            <person name="Souza B."/>
            <person name="Dacheux D."/>
            <person name="Elliott J.M."/>
            <person name="Derbise A."/>
            <person name="Hauser L.J."/>
            <person name="Garcia E."/>
        </authorList>
    </citation>
    <scope>NUCLEOTIDE SEQUENCE [LARGE SCALE GENOMIC DNA]</scope>
    <source>
        <strain>IP32953</strain>
    </source>
</reference>
<sequence>MIVYLHGFDSNSPGNHEKVLQLQFIDPDVRFISYSTLHPRHDMQYLLKEVDKAIQQGGDEKSLICGVGLGGFWAERIGFLCGIRQVAFNPNLYPQENMSGKIDRPEEYIDIASKCIDGFREKNRDRCLVVLSRHDEMLDSQRTAGDLHPYYEIVWDDKQNHKFKDLSPHLQRIKAFKTLG</sequence>
<feature type="chain" id="PRO_1000064309" description="UPF0227 protein YPTB2448">
    <location>
        <begin position="1"/>
        <end position="180"/>
    </location>
</feature>
<comment type="similarity">
    <text evidence="1">Belongs to the UPF0227 family.</text>
</comment>
<proteinExistence type="inferred from homology"/>
<name>Y2448_YERPS</name>
<gene>
    <name type="ordered locus">YPTB2448</name>
</gene>
<organism>
    <name type="scientific">Yersinia pseudotuberculosis serotype I (strain IP32953)</name>
    <dbReference type="NCBI Taxonomy" id="273123"/>
    <lineage>
        <taxon>Bacteria</taxon>
        <taxon>Pseudomonadati</taxon>
        <taxon>Pseudomonadota</taxon>
        <taxon>Gammaproteobacteria</taxon>
        <taxon>Enterobacterales</taxon>
        <taxon>Yersiniaceae</taxon>
        <taxon>Yersinia</taxon>
    </lineage>
</organism>
<protein>
    <recommendedName>
        <fullName evidence="1">UPF0227 protein YPTB2448</fullName>
    </recommendedName>
</protein>
<evidence type="ECO:0000255" key="1">
    <source>
        <dbReference type="HAMAP-Rule" id="MF_01047"/>
    </source>
</evidence>